<comment type="function">
    <text>Conversion of NADPH, generated by peripheral catabolic pathways, to NADH, which can enter the respiratory chain for energy generation.</text>
</comment>
<comment type="catalytic activity">
    <reaction>
        <text>NAD(+) + NADPH = NADH + NADP(+)</text>
        <dbReference type="Rhea" id="RHEA:11692"/>
        <dbReference type="ChEBI" id="CHEBI:57540"/>
        <dbReference type="ChEBI" id="CHEBI:57783"/>
        <dbReference type="ChEBI" id="CHEBI:57945"/>
        <dbReference type="ChEBI" id="CHEBI:58349"/>
        <dbReference type="EC" id="1.6.1.1"/>
    </reaction>
</comment>
<comment type="cofactor">
    <cofactor>
        <name>FAD</name>
        <dbReference type="ChEBI" id="CHEBI:57692"/>
    </cofactor>
    <text>Binds 1 FAD per subunit.</text>
</comment>
<comment type="subunit">
    <text evidence="2">Homooctamer. Forms a polymeric filamentous structure in purified form.</text>
</comment>
<comment type="subcellular location">
    <subcellularLocation>
        <location>Cytoplasm</location>
    </subcellularLocation>
</comment>
<comment type="similarity">
    <text evidence="3">Belongs to the class-I pyridine nucleotide-disulfide oxidoreductase family.</text>
</comment>
<accession>Q9XBQ9</accession>
<dbReference type="EC" id="1.6.1.1"/>
<dbReference type="EMBL" id="AF159108">
    <property type="protein sequence ID" value="AAD40691.1"/>
    <property type="molecule type" value="Genomic_DNA"/>
</dbReference>
<dbReference type="RefSeq" id="WP_012700102.1">
    <property type="nucleotide sequence ID" value="NZ_FPKM01000023.1"/>
</dbReference>
<dbReference type="SMR" id="Q9XBQ9"/>
<dbReference type="GeneID" id="88184766"/>
<dbReference type="OMA" id="SHCLMAV"/>
<dbReference type="GO" id="GO:0005829">
    <property type="term" value="C:cytosol"/>
    <property type="evidence" value="ECO:0007669"/>
    <property type="project" value="TreeGrafter"/>
</dbReference>
<dbReference type="GO" id="GO:0004148">
    <property type="term" value="F:dihydrolipoyl dehydrogenase (NADH) activity"/>
    <property type="evidence" value="ECO:0007669"/>
    <property type="project" value="TreeGrafter"/>
</dbReference>
<dbReference type="GO" id="GO:0050660">
    <property type="term" value="F:flavin adenine dinucleotide binding"/>
    <property type="evidence" value="ECO:0007669"/>
    <property type="project" value="TreeGrafter"/>
</dbReference>
<dbReference type="GO" id="GO:0003957">
    <property type="term" value="F:NAD(P)+ transhydrogenase (Si-specific) activity"/>
    <property type="evidence" value="ECO:0007669"/>
    <property type="project" value="UniProtKB-UniRule"/>
</dbReference>
<dbReference type="GO" id="GO:0006103">
    <property type="term" value="P:2-oxoglutarate metabolic process"/>
    <property type="evidence" value="ECO:0007669"/>
    <property type="project" value="TreeGrafter"/>
</dbReference>
<dbReference type="GO" id="GO:0006739">
    <property type="term" value="P:NADP metabolic process"/>
    <property type="evidence" value="ECO:0007669"/>
    <property type="project" value="UniProtKB-UniRule"/>
</dbReference>
<dbReference type="FunFam" id="3.30.390.30:FF:000002">
    <property type="entry name" value="Soluble pyridine nucleotide transhydrogenase"/>
    <property type="match status" value="1"/>
</dbReference>
<dbReference type="FunFam" id="3.50.50.60:FF:000008">
    <property type="entry name" value="Soluble pyridine nucleotide transhydrogenase"/>
    <property type="match status" value="1"/>
</dbReference>
<dbReference type="Gene3D" id="3.30.390.30">
    <property type="match status" value="1"/>
</dbReference>
<dbReference type="Gene3D" id="3.50.50.60">
    <property type="entry name" value="FAD/NAD(P)-binding domain"/>
    <property type="match status" value="2"/>
</dbReference>
<dbReference type="HAMAP" id="MF_00247">
    <property type="entry name" value="SthA"/>
    <property type="match status" value="1"/>
</dbReference>
<dbReference type="InterPro" id="IPR050151">
    <property type="entry name" value="Class-I_Pyr_Nuc-Dis_Oxidored"/>
</dbReference>
<dbReference type="InterPro" id="IPR036188">
    <property type="entry name" value="FAD/NAD-bd_sf"/>
</dbReference>
<dbReference type="InterPro" id="IPR023753">
    <property type="entry name" value="FAD/NAD-binding_dom"/>
</dbReference>
<dbReference type="InterPro" id="IPR016156">
    <property type="entry name" value="FAD/NAD-linked_Rdtase_dimer_sf"/>
</dbReference>
<dbReference type="InterPro" id="IPR001100">
    <property type="entry name" value="Pyr_nuc-diS_OxRdtase"/>
</dbReference>
<dbReference type="InterPro" id="IPR004099">
    <property type="entry name" value="Pyr_nucl-diS_OxRdtase_dimer"/>
</dbReference>
<dbReference type="InterPro" id="IPR022962">
    <property type="entry name" value="STH_gammaproteobact"/>
</dbReference>
<dbReference type="NCBIfam" id="NF003585">
    <property type="entry name" value="PRK05249.1"/>
    <property type="match status" value="1"/>
</dbReference>
<dbReference type="PANTHER" id="PTHR22912">
    <property type="entry name" value="DISULFIDE OXIDOREDUCTASE"/>
    <property type="match status" value="1"/>
</dbReference>
<dbReference type="PANTHER" id="PTHR22912:SF93">
    <property type="entry name" value="SOLUBLE PYRIDINE NUCLEOTIDE TRANSHYDROGENASE"/>
    <property type="match status" value="1"/>
</dbReference>
<dbReference type="Pfam" id="PF07992">
    <property type="entry name" value="Pyr_redox_2"/>
    <property type="match status" value="1"/>
</dbReference>
<dbReference type="Pfam" id="PF02852">
    <property type="entry name" value="Pyr_redox_dim"/>
    <property type="match status" value="1"/>
</dbReference>
<dbReference type="PIRSF" id="PIRSF000350">
    <property type="entry name" value="Mercury_reductase_MerA"/>
    <property type="match status" value="1"/>
</dbReference>
<dbReference type="PRINTS" id="PR00368">
    <property type="entry name" value="FADPNR"/>
</dbReference>
<dbReference type="PRINTS" id="PR00411">
    <property type="entry name" value="PNDRDTASEI"/>
</dbReference>
<dbReference type="SUPFAM" id="SSF51905">
    <property type="entry name" value="FAD/NAD(P)-binding domain"/>
    <property type="match status" value="1"/>
</dbReference>
<dbReference type="SUPFAM" id="SSF55424">
    <property type="entry name" value="FAD/NAD-linked reductases, dimerisation (C-terminal) domain"/>
    <property type="match status" value="1"/>
</dbReference>
<evidence type="ECO:0000250" key="1"/>
<evidence type="ECO:0000269" key="2">
    <source>
    </source>
</evidence>
<evidence type="ECO:0000305" key="3"/>
<name>STHA_AZOVI</name>
<gene>
    <name type="primary">sthA</name>
    <name type="synonym">sth</name>
</gene>
<feature type="chain" id="PRO_0000068060" description="Soluble pyridine nucleotide transhydrogenase">
    <location>
        <begin position="1"/>
        <end position="464"/>
    </location>
</feature>
<feature type="binding site" evidence="1">
    <location>
        <begin position="35"/>
        <end position="44"/>
    </location>
    <ligand>
        <name>FAD</name>
        <dbReference type="ChEBI" id="CHEBI:57692"/>
    </ligand>
</feature>
<proteinExistence type="evidence at protein level"/>
<reference key="1">
    <citation type="journal article" date="2000" name="FEMS Microbiol. Lett.">
        <title>Cloning of the sth gene from Azotobacter vinelandii and construction of chimeric soluble pyridine nucleotide transhydrogenases.</title>
        <authorList>
            <person name="Boonstra B."/>
            <person name="Bjorklund L."/>
            <person name="French C.E."/>
            <person name="Wainwright I."/>
            <person name="Bruce N.C."/>
        </authorList>
    </citation>
    <scope>NUCLEOTIDE SEQUENCE [GENOMIC DNA]</scope>
    <source>
        <strain>ATCC 478 / DSM 2289 / BCRC 14361 / JCM 21475 / KCTC 12137 / NBRC 102612 / NCIMB 12096 / NRRL B-14641 / VKM B-1617 / NRS 16</strain>
    </source>
</reference>
<reference key="2">
    <citation type="journal article" date="1980" name="Eur. J. Biochem.">
        <title>Pyridine nucleotide transhydrogenase from Azotobacter vinelandii. Improved purification, physical properties and subunit arrangement in purified polymers.</title>
        <authorList>
            <person name="Voordouw G."/>
            <person name="van der Vies S.M."/>
            <person name="Eweg J.K."/>
            <person name="Veeger C."/>
            <person name="van Breemen J.F.L."/>
            <person name="van Bruggen E.F.J."/>
        </authorList>
    </citation>
    <scope>CHARACTERIZATION</scope>
    <source>
        <strain>ATCC 478 / DSM 2289 / BCRC 14361 / JCM 21475 / KCTC 12137 / NBRC 102612 / NCIMB 12096 / NRRL B-14641 / VKM B-1617 / NRS 16</strain>
    </source>
</reference>
<reference key="3">
    <citation type="journal article" date="1979" name="Eur. J. Biochem.">
        <title>Structure of pyridine nucleotide transhydrogenase from Azotobacter vinelandii.</title>
        <authorList>
            <person name="Voordouw G."/>
            <person name="Veeger C."/>
            <person name="van Breemen J.F.L."/>
            <person name="van Bruggen E.F.J."/>
        </authorList>
    </citation>
    <scope>SUBUNIT</scope>
    <source>
        <strain>ATCC 478 / DSM 2289 / BCRC 14361 / JCM 21475 / KCTC 12137 / NBRC 102612 / NCIMB 12096 / NRRL B-14641 / VKM B-1617 / NRS 16</strain>
    </source>
</reference>
<sequence length="464" mass="51331">MAVYNYDVVVIGTGPAGEGAAMNAVKAGRKVAVVDDRPQVGGNCTHLGTIPSKALRHSVRQIMQYNNNPLFRQIGEPRWFSFADVLKSAEQVIAKQVSSRTGYYARNRIDTFFGTASFCDEHTIEVVHLNGMVETLVAKQFVIATGSRPYRPADVDFTHPRIYDSDTILSLGHTPRRLIIYGAGVIGCEYASIFSGLGVLVDLIDNRDQLLSFLDDEISDSLSYHLRNNNVLIRHNEEYERVEGLDNGVILHLKSGKKIKADAFLWSNGRTGNTDKLGLENIGLKANGRGQIQVDEHYRTEVSNIYAAGDVIGWPSLASAAYDQGRSAAGSITENDSWRFVDDVPTGIYTIPEISSVGKTERELTQAKVPYEVGKAFFKGMARAQIAVEKAGMLKILFHRETLEILGVHCFGYQASEIVHIGQAIMNQKGEANTLKYFINTTFNYPTMAEAYRVAAYDGLNRLF</sequence>
<organism>
    <name type="scientific">Azotobacter vinelandii</name>
    <dbReference type="NCBI Taxonomy" id="354"/>
    <lineage>
        <taxon>Bacteria</taxon>
        <taxon>Pseudomonadati</taxon>
        <taxon>Pseudomonadota</taxon>
        <taxon>Gammaproteobacteria</taxon>
        <taxon>Pseudomonadales</taxon>
        <taxon>Pseudomonadaceae</taxon>
        <taxon>Azotobacter</taxon>
    </lineage>
</organism>
<protein>
    <recommendedName>
        <fullName>Soluble pyridine nucleotide transhydrogenase</fullName>
        <shortName>STH</shortName>
        <ecNumber>1.6.1.1</ecNumber>
    </recommendedName>
    <alternativeName>
        <fullName>NAD(P)(+) transhydrogenase [B-specific]</fullName>
    </alternativeName>
</protein>
<keyword id="KW-0963">Cytoplasm</keyword>
<keyword id="KW-0274">FAD</keyword>
<keyword id="KW-0285">Flavoprotein</keyword>
<keyword id="KW-0520">NAD</keyword>
<keyword id="KW-0521">NADP</keyword>
<keyword id="KW-0560">Oxidoreductase</keyword>